<name>GMPPA_PIG</name>
<reference key="1">
    <citation type="journal article" date="2004" name="Nucleic Acids Res.">
        <title>PEDE (Pig EST Data Explorer): construction of a database for ESTs derived from porcine full-length cDNA libraries.</title>
        <authorList>
            <person name="Uenishi H."/>
            <person name="Eguchi T."/>
            <person name="Suzuki K."/>
            <person name="Sawazaki T."/>
            <person name="Toki D."/>
            <person name="Shinkai H."/>
            <person name="Okumura N."/>
            <person name="Hamasima N."/>
            <person name="Awata T."/>
        </authorList>
    </citation>
    <scope>NUCLEOTIDE SEQUENCE [LARGE SCALE MRNA]</scope>
    <source>
        <tissue>Liver</tissue>
        <tissue>Ovary</tissue>
        <tissue>Uterus</tissue>
    </source>
</reference>
<reference key="2">
    <citation type="submission" date="2009-11" db="EMBL/GenBank/DDBJ databases">
        <authorList>
            <consortium name="Porcine genome sequencing project"/>
        </authorList>
    </citation>
    <scope>NUCLEOTIDE SEQUENCE [LARGE SCALE GENOMIC DNA]</scope>
</reference>
<reference key="3">
    <citation type="journal article" date="1993" name="J. Biol. Chem.">
        <title>GDP-mannose pyrophosphorylase. Purification to homogeneity, properties, and utilization to prepare photoaffinity analogs.</title>
        <authorList>
            <person name="Szumilo T."/>
            <person name="Drake R.R."/>
            <person name="York J.L."/>
            <person name="Elbein A.D."/>
        </authorList>
    </citation>
    <scope>PROTEIN SEQUENCE OF 127-139</scope>
    <scope>INTERACTION WITH GMPPB</scope>
    <scope>TISSUE SPECIFICITY</scope>
    <scope>BLOCKAGE OF N-TERMINUS</scope>
    <source>
        <tissue>Liver</tissue>
    </source>
</reference>
<proteinExistence type="evidence at protein level"/>
<comment type="function">
    <text evidence="2">Regulatory subunit of the GMPPA-GMPPB mannose-1-phosphate guanylyltransferase complex; reduces the catalytic activity of GMPPB when part of the complex. Mediates allosteric feedback inhibition of GMPPB catalytic activity upon binding GDP-alpha-D-mannose. Together with GMPPB regulates GDP-alpha-D-mannose levels.</text>
</comment>
<comment type="subunit">
    <text evidence="2">Component of the GMPPA-GMPPB mannose-1-phosphate guanylyltransferase complex composed of 4 GMPPA subunits and 8 GMPPB subunits; the complex is organized into three layers, a central layer made up of 2 GMPPA dimers sandwiched between two layers each made up of 2 GMPPB dimers.</text>
</comment>
<comment type="subcellular location">
    <subcellularLocation>
        <location evidence="1">Cytoplasm</location>
    </subcellularLocation>
</comment>
<comment type="tissue specificity">
    <text evidence="3">Expressed in the liver (at protein level).</text>
</comment>
<comment type="domain">
    <text evidence="2">The N-terminal substrate-binding domain adopts a Rossman-like fold and has a binding pocket for GTP or GDP-alpha-D-mannose.</text>
</comment>
<comment type="domain">
    <text evidence="2">The C-terminal domain consists of a series of tandem hexapeptide repeats that adopt a beta-helix conformation. The beta-helix forms several protein interaction surfaces involved in assembly of the GMPPA-GMPPB mannose-1-phosphate guanylyltransferase complex. A loop extending from the C-terminal domain (C-loop) is involved in interaction with other subunits of the GMPPA-GMPPB complex and may be involved in allosteric inhibition of GMPPB catalytic activity by GMPPA.</text>
</comment>
<comment type="similarity">
    <text evidence="4">Belongs to the transferase hexapeptide repeat family.</text>
</comment>
<gene>
    <name type="primary">GMPPA</name>
</gene>
<organism>
    <name type="scientific">Sus scrofa</name>
    <name type="common">Pig</name>
    <dbReference type="NCBI Taxonomy" id="9823"/>
    <lineage>
        <taxon>Eukaryota</taxon>
        <taxon>Metazoa</taxon>
        <taxon>Chordata</taxon>
        <taxon>Craniata</taxon>
        <taxon>Vertebrata</taxon>
        <taxon>Euteleostomi</taxon>
        <taxon>Mammalia</taxon>
        <taxon>Eutheria</taxon>
        <taxon>Laurasiatheria</taxon>
        <taxon>Artiodactyla</taxon>
        <taxon>Suina</taxon>
        <taxon>Suidae</taxon>
        <taxon>Sus</taxon>
    </lineage>
</organism>
<keyword id="KW-0963">Cytoplasm</keyword>
<keyword id="KW-0903">Direct protein sequencing</keyword>
<keyword id="KW-1185">Reference proteome</keyword>
<accession>I3LUP1</accession>
<sequence length="420" mass="46173">MLKAVILIGGPQKGTRFRPLSFEVPKPLFPVAGVPMIQHHIEACAQVPGMQEILLIGFYQPDEPLTRFLEAAQQEFNLPIRYLQEFAPLGTGGGLYHFRDQILAGGPEAFFVLNADVCSDFPLSAMLDAHRHRPHPFLLLGTTANRTQSLNYGCIVENPQTHEVLHYVEKPSTFVSDIINCGIYLFSPETLKPLGKFFQRYQQGGQLEDSSVLWPGAGTIRLEQDVFAALAGQGQIYVHLTDGIWSQIKSAGSALYASRLYLSQYQLTHPERLAKHTPGGPRIRGNVYIHPTAKVAPSAVLGPNVSIGEGVTVGEGVRLRESIVLHGATLQEHTCVLHSIVGWGSTVGRWARVEGTPNDPNPNDPRAHMDSESLFKDGKLLPAITILGCRVRIPAEVLILNSIVLPHKELSRSFTNQIIL</sequence>
<protein>
    <recommendedName>
        <fullName evidence="4">Mannose-1-phosphate guanylyltransferase regulatory subunit alpha</fullName>
    </recommendedName>
    <alternativeName>
        <fullName>GDP-mannose pyrophosphorylase 43-kDa subunit</fullName>
    </alternativeName>
    <alternativeName>
        <fullName>GDP-mannose pyrophosphorylase A</fullName>
        <shortName>GMPP-alpha</shortName>
    </alternativeName>
    <alternativeName>
        <fullName>GTP-mannose-1-phosphate guanylyltransferase alpha</fullName>
    </alternativeName>
</protein>
<feature type="chain" id="PRO_0000425103" description="Mannose-1-phosphate guanylyltransferase regulatory subunit alpha">
    <location>
        <begin position="1"/>
        <end position="420"/>
    </location>
</feature>
<feature type="region of interest" description="Substrate-binding domain" evidence="2">
    <location>
        <begin position="2"/>
        <end position="251"/>
    </location>
</feature>
<feature type="region of interest" description="Hexapeptide repeat domain" evidence="2">
    <location>
        <begin position="273"/>
        <end position="420"/>
    </location>
</feature>
<feature type="region of interest" description="C-loop" evidence="2">
    <location>
        <begin position="356"/>
        <end position="384"/>
    </location>
</feature>
<feature type="binding site" evidence="2">
    <location>
        <position position="85"/>
    </location>
    <ligand>
        <name>GDP-alpha-D-mannose</name>
        <dbReference type="ChEBI" id="CHEBI:57527"/>
    </ligand>
</feature>
<feature type="binding site" evidence="2">
    <location>
        <position position="247"/>
    </location>
    <ligand>
        <name>GDP-alpha-D-mannose</name>
        <dbReference type="ChEBI" id="CHEBI:57527"/>
    </ligand>
</feature>
<feature type="sequence conflict" description="In Ref. 1; AK395123." evidence="4" ref="1">
    <original>G</original>
    <variation>D</variation>
    <location>
        <position position="182"/>
    </location>
</feature>
<feature type="sequence conflict" description="In Ref. 1; AK232621/AK239909/AK395123." evidence="4" ref="1">
    <original>T</original>
    <variation>A</variation>
    <location>
        <position position="190"/>
    </location>
</feature>
<feature type="sequence conflict" description="In Ref. 1; AK232621/AK239909/AK395123." evidence="4" ref="1">
    <original>KF</original>
    <variation>EV</variation>
    <location>
        <begin position="196"/>
        <end position="197"/>
    </location>
</feature>
<feature type="sequence conflict" description="In Ref. 1; AK232621/AK239909/AK395123." evidence="4" ref="1">
    <original>Y</original>
    <variation>N</variation>
    <location>
        <position position="201"/>
    </location>
</feature>
<feature type="sequence conflict" description="In Ref. 1; AK232621/AK239909/AK395123." evidence="4" ref="1">
    <original>G</original>
    <variation>D</variation>
    <location>
        <position position="204"/>
    </location>
</feature>
<feature type="sequence conflict" description="In Ref. 1; AK232621." evidence="4" ref="1">
    <original>I</original>
    <variation>V</variation>
    <location>
        <position position="283"/>
    </location>
</feature>
<evidence type="ECO:0000250" key="1"/>
<evidence type="ECO:0000250" key="2">
    <source>
        <dbReference type="UniProtKB" id="Q96IJ6"/>
    </source>
</evidence>
<evidence type="ECO:0000269" key="3">
    <source>
    </source>
</evidence>
<evidence type="ECO:0000305" key="4"/>
<dbReference type="EMBL" id="AK232621">
    <property type="status" value="NOT_ANNOTATED_CDS"/>
    <property type="molecule type" value="mRNA"/>
</dbReference>
<dbReference type="EMBL" id="AK239909">
    <property type="status" value="NOT_ANNOTATED_CDS"/>
    <property type="molecule type" value="mRNA"/>
</dbReference>
<dbReference type="EMBL" id="AK395123">
    <property type="status" value="NOT_ANNOTATED_CDS"/>
    <property type="molecule type" value="mRNA"/>
</dbReference>
<dbReference type="EMBL" id="FP565246">
    <property type="status" value="NOT_ANNOTATED_CDS"/>
    <property type="molecule type" value="Genomic_DNA"/>
</dbReference>
<dbReference type="SMR" id="I3LUP1"/>
<dbReference type="FunCoup" id="I3LUP1">
    <property type="interactions" value="271"/>
</dbReference>
<dbReference type="STRING" id="9823.ENSSSCP00000027841"/>
<dbReference type="PaxDb" id="9823-ENSSSCP00000027841"/>
<dbReference type="PeptideAtlas" id="I3LUP1"/>
<dbReference type="eggNOG" id="KOG1460">
    <property type="taxonomic scope" value="Eukaryota"/>
</dbReference>
<dbReference type="HOGENOM" id="CLU_029499_3_0_1"/>
<dbReference type="InParanoid" id="I3LUP1"/>
<dbReference type="TreeFam" id="TF300832"/>
<dbReference type="Proteomes" id="UP000008227">
    <property type="component" value="Unplaced"/>
</dbReference>
<dbReference type="Proteomes" id="UP000314985">
    <property type="component" value="Unplaced"/>
</dbReference>
<dbReference type="Proteomes" id="UP000694570">
    <property type="component" value="Unplaced"/>
</dbReference>
<dbReference type="Proteomes" id="UP000694571">
    <property type="component" value="Unplaced"/>
</dbReference>
<dbReference type="Proteomes" id="UP000694720">
    <property type="component" value="Unplaced"/>
</dbReference>
<dbReference type="Proteomes" id="UP000694722">
    <property type="component" value="Unplaced"/>
</dbReference>
<dbReference type="Proteomes" id="UP000694723">
    <property type="component" value="Unplaced"/>
</dbReference>
<dbReference type="Proteomes" id="UP000694724">
    <property type="component" value="Unplaced"/>
</dbReference>
<dbReference type="Proteomes" id="UP000694725">
    <property type="component" value="Unplaced"/>
</dbReference>
<dbReference type="Proteomes" id="UP000694726">
    <property type="component" value="Unplaced"/>
</dbReference>
<dbReference type="Proteomes" id="UP000694727">
    <property type="component" value="Unplaced"/>
</dbReference>
<dbReference type="Proteomes" id="UP000694728">
    <property type="component" value="Unplaced"/>
</dbReference>
<dbReference type="GO" id="GO:0005737">
    <property type="term" value="C:cytoplasm"/>
    <property type="evidence" value="ECO:0000318"/>
    <property type="project" value="GO_Central"/>
</dbReference>
<dbReference type="GO" id="GO:0120508">
    <property type="term" value="C:GDP-mannose pyrophosphorylase complex"/>
    <property type="evidence" value="ECO:0000250"/>
    <property type="project" value="FlyBase"/>
</dbReference>
<dbReference type="GO" id="GO:0016740">
    <property type="term" value="F:transferase activity"/>
    <property type="evidence" value="ECO:0007669"/>
    <property type="project" value="InterPro"/>
</dbReference>
<dbReference type="GO" id="GO:0009058">
    <property type="term" value="P:biosynthetic process"/>
    <property type="evidence" value="ECO:0007669"/>
    <property type="project" value="InterPro"/>
</dbReference>
<dbReference type="CDD" id="cd06428">
    <property type="entry name" value="M1P_guanylylT_A_like_N"/>
    <property type="match status" value="1"/>
</dbReference>
<dbReference type="FunFam" id="3.90.550.10:FF:000071">
    <property type="entry name" value="Mannose-1-phosphate guanyltransferase alpha"/>
    <property type="match status" value="1"/>
</dbReference>
<dbReference type="FunFam" id="2.160.10.10:FF:000023">
    <property type="entry name" value="Mannose-1-phosphate guanyltransferase alpha (Predicted)"/>
    <property type="match status" value="1"/>
</dbReference>
<dbReference type="Gene3D" id="2.160.10.10">
    <property type="entry name" value="Hexapeptide repeat proteins"/>
    <property type="match status" value="1"/>
</dbReference>
<dbReference type="Gene3D" id="3.90.550.10">
    <property type="entry name" value="Spore Coat Polysaccharide Biosynthesis Protein SpsA, Chain A"/>
    <property type="match status" value="1"/>
</dbReference>
<dbReference type="InterPro" id="IPR056729">
    <property type="entry name" value="GMPPB_C"/>
</dbReference>
<dbReference type="InterPro" id="IPR018357">
    <property type="entry name" value="Hexapep_transf_CS"/>
</dbReference>
<dbReference type="InterPro" id="IPR050486">
    <property type="entry name" value="Mannose-1P_guanyltransferase"/>
</dbReference>
<dbReference type="InterPro" id="IPR005835">
    <property type="entry name" value="NTP_transferase_dom"/>
</dbReference>
<dbReference type="InterPro" id="IPR029044">
    <property type="entry name" value="Nucleotide-diphossugar_trans"/>
</dbReference>
<dbReference type="PANTHER" id="PTHR22572">
    <property type="entry name" value="SUGAR-1-PHOSPHATE GUANYL TRANSFERASE"/>
    <property type="match status" value="1"/>
</dbReference>
<dbReference type="Pfam" id="PF25087">
    <property type="entry name" value="GMPPB_C"/>
    <property type="match status" value="1"/>
</dbReference>
<dbReference type="Pfam" id="PF00483">
    <property type="entry name" value="NTP_transferase"/>
    <property type="match status" value="1"/>
</dbReference>
<dbReference type="SUPFAM" id="SSF53448">
    <property type="entry name" value="Nucleotide-diphospho-sugar transferases"/>
    <property type="match status" value="1"/>
</dbReference>
<dbReference type="PROSITE" id="PS00101">
    <property type="entry name" value="HEXAPEP_TRANSFERASES"/>
    <property type="match status" value="1"/>
</dbReference>